<keyword id="KW-0975">Bacterial flagellum</keyword>
<keyword id="KW-0998">Cell outer membrane</keyword>
<keyword id="KW-0449">Lipoprotein</keyword>
<keyword id="KW-0472">Membrane</keyword>
<keyword id="KW-0564">Palmitate</keyword>
<keyword id="KW-0732">Signal</keyword>
<feature type="signal peptide" evidence="1">
    <location>
        <begin position="1"/>
        <end position="15"/>
    </location>
</feature>
<feature type="chain" id="PRO_1000123938" description="Flagellar L-ring protein">
    <location>
        <begin position="16"/>
        <end position="226"/>
    </location>
</feature>
<feature type="lipid moiety-binding region" description="N-palmitoyl cysteine" evidence="1">
    <location>
        <position position="16"/>
    </location>
</feature>
<feature type="lipid moiety-binding region" description="S-diacylglycerol cysteine" evidence="1">
    <location>
        <position position="16"/>
    </location>
</feature>
<dbReference type="EMBL" id="CP001103">
    <property type="protein sequence ID" value="AEA97289.1"/>
    <property type="molecule type" value="Genomic_DNA"/>
</dbReference>
<dbReference type="RefSeq" id="WP_012517632.1">
    <property type="nucleotide sequence ID" value="NC_011138.3"/>
</dbReference>
<dbReference type="SMR" id="B4RV30"/>
<dbReference type="KEGG" id="amc:MADE_1005735"/>
<dbReference type="HOGENOM" id="CLU_069313_0_2_6"/>
<dbReference type="Proteomes" id="UP000001870">
    <property type="component" value="Chromosome"/>
</dbReference>
<dbReference type="GO" id="GO:0009427">
    <property type="term" value="C:bacterial-type flagellum basal body, distal rod, L ring"/>
    <property type="evidence" value="ECO:0007669"/>
    <property type="project" value="InterPro"/>
</dbReference>
<dbReference type="GO" id="GO:0009279">
    <property type="term" value="C:cell outer membrane"/>
    <property type="evidence" value="ECO:0007669"/>
    <property type="project" value="UniProtKB-SubCell"/>
</dbReference>
<dbReference type="GO" id="GO:0003774">
    <property type="term" value="F:cytoskeletal motor activity"/>
    <property type="evidence" value="ECO:0007669"/>
    <property type="project" value="InterPro"/>
</dbReference>
<dbReference type="GO" id="GO:0071973">
    <property type="term" value="P:bacterial-type flagellum-dependent cell motility"/>
    <property type="evidence" value="ECO:0007669"/>
    <property type="project" value="InterPro"/>
</dbReference>
<dbReference type="HAMAP" id="MF_00415">
    <property type="entry name" value="FlgH"/>
    <property type="match status" value="1"/>
</dbReference>
<dbReference type="InterPro" id="IPR000527">
    <property type="entry name" value="Flag_Lring"/>
</dbReference>
<dbReference type="NCBIfam" id="NF001304">
    <property type="entry name" value="PRK00249.1-4"/>
    <property type="match status" value="1"/>
</dbReference>
<dbReference type="NCBIfam" id="NF009338">
    <property type="entry name" value="PRK12698.1"/>
    <property type="match status" value="1"/>
</dbReference>
<dbReference type="PANTHER" id="PTHR34933">
    <property type="entry name" value="FLAGELLAR L-RING PROTEIN"/>
    <property type="match status" value="1"/>
</dbReference>
<dbReference type="PANTHER" id="PTHR34933:SF1">
    <property type="entry name" value="FLAGELLAR L-RING PROTEIN"/>
    <property type="match status" value="1"/>
</dbReference>
<dbReference type="Pfam" id="PF02107">
    <property type="entry name" value="FlgH"/>
    <property type="match status" value="1"/>
</dbReference>
<dbReference type="PRINTS" id="PR01008">
    <property type="entry name" value="FLGLRINGFLGH"/>
</dbReference>
<dbReference type="PROSITE" id="PS51257">
    <property type="entry name" value="PROKAR_LIPOPROTEIN"/>
    <property type="match status" value="1"/>
</dbReference>
<evidence type="ECO:0000255" key="1">
    <source>
        <dbReference type="HAMAP-Rule" id="MF_00415"/>
    </source>
</evidence>
<reference key="1">
    <citation type="journal article" date="2008" name="ISME J.">
        <title>Comparative genomics of two ecotypes of the marine planktonic copiotroph Alteromonas macleodii suggests alternative lifestyles associated with different kinds of particulate organic matter.</title>
        <authorList>
            <person name="Ivars-Martinez E."/>
            <person name="Martin-Cuadrado A.-B."/>
            <person name="D'Auria G."/>
            <person name="Mira A."/>
            <person name="Ferriera S."/>
            <person name="Johnson J."/>
            <person name="Friedman R."/>
            <person name="Rodriguez-Valera F."/>
        </authorList>
    </citation>
    <scope>NUCLEOTIDE SEQUENCE [LARGE SCALE GENOMIC DNA]</scope>
    <source>
        <strain>DSM 17117 / CIP 110805 / LMG 28347 / Deep ecotype</strain>
    </source>
</reference>
<proteinExistence type="inferred from homology"/>
<name>FLGH_ALTMD</name>
<comment type="function">
    <text evidence="1">Assembles around the rod to form the L-ring and probably protects the motor/basal body from shearing forces during rotation.</text>
</comment>
<comment type="subunit">
    <text evidence="1">The basal body constitutes a major portion of the flagellar organelle and consists of four rings (L,P,S, and M) mounted on a central rod.</text>
</comment>
<comment type="subcellular location">
    <subcellularLocation>
        <location evidence="1">Cell outer membrane</location>
        <topology evidence="1">Lipid-anchor</topology>
    </subcellularLocation>
    <subcellularLocation>
        <location evidence="1">Bacterial flagellum basal body</location>
    </subcellularLocation>
</comment>
<comment type="similarity">
    <text evidence="1">Belongs to the FlgH family.</text>
</comment>
<protein>
    <recommendedName>
        <fullName evidence="1">Flagellar L-ring protein</fullName>
    </recommendedName>
    <alternativeName>
        <fullName evidence="1">Basal body L-ring protein</fullName>
    </alternativeName>
</protein>
<accession>B4RV30</accession>
<accession>F2G365</accession>
<organism>
    <name type="scientific">Alteromonas mediterranea (strain DSM 17117 / CIP 110805 / LMG 28347 / Deep ecotype)</name>
    <dbReference type="NCBI Taxonomy" id="1774373"/>
    <lineage>
        <taxon>Bacteria</taxon>
        <taxon>Pseudomonadati</taxon>
        <taxon>Pseudomonadota</taxon>
        <taxon>Gammaproteobacteria</taxon>
        <taxon>Alteromonadales</taxon>
        <taxon>Alteromonadaceae</taxon>
        <taxon>Alteromonas/Salinimonas group</taxon>
        <taxon>Alteromonas</taxon>
    </lineage>
</organism>
<gene>
    <name evidence="1" type="primary">flgH</name>
    <name type="ordered locus">MADE_1005735</name>
</gene>
<sequence>MRILGLSAALLILGGCASTNEPPVQANDPSFAPVVPDYPRETVVEDGSLFRSQLANNLYSDVTARRVGDIITVTLSENTQASKSADTSTAKDTNVNLNPITGLAGQAINIGGESIQLGVSSSRDFSGDAAANQSNSLIGAISVTVVDVLPNSNLVIRGEKWLTLNQGDEYIRLTGIIRPADISPENEIVSTKVANARIQYSGTGSFARAQEKGWLTKFFDSTWWPL</sequence>